<name>MENH_SALSV</name>
<accession>B4TPJ1</accession>
<protein>
    <recommendedName>
        <fullName evidence="1">2-succinyl-6-hydroxy-2,4-cyclohexadiene-1-carboxylate synthase</fullName>
        <shortName evidence="1">SHCHC synthase</shortName>
        <ecNumber evidence="1">4.2.99.20</ecNumber>
    </recommendedName>
</protein>
<proteinExistence type="inferred from homology"/>
<organism>
    <name type="scientific">Salmonella schwarzengrund (strain CVM19633)</name>
    <dbReference type="NCBI Taxonomy" id="439843"/>
    <lineage>
        <taxon>Bacteria</taxon>
        <taxon>Pseudomonadati</taxon>
        <taxon>Pseudomonadota</taxon>
        <taxon>Gammaproteobacteria</taxon>
        <taxon>Enterobacterales</taxon>
        <taxon>Enterobacteriaceae</taxon>
        <taxon>Salmonella</taxon>
    </lineage>
</organism>
<sequence>MMLHAQHMPGQPGAPSLVFLHGFSGDCREWQPVGEQFHGCSRLYIDLPGHGGSAAIPVGGFADVIRLLRATLISYNILKFWLVGYSLGGRVAMMAACQGIPGLCGLVVEGGHPGLQNEQARAERRLSDGRWAERFRREPLTEVFHDWYQQPVFASLTAQQRQALTALRSQNNGETLAAMLEATSLAAQPDLREALNALAFPFYYLCGERDSKFRALAQEVAATCHVIRNAGHNAHRENPAGVVDSLAQILRL</sequence>
<gene>
    <name evidence="1" type="primary">menH</name>
    <name type="ordered locus">SeSA_A2536</name>
</gene>
<evidence type="ECO:0000255" key="1">
    <source>
        <dbReference type="HAMAP-Rule" id="MF_01660"/>
    </source>
</evidence>
<keyword id="KW-0456">Lyase</keyword>
<keyword id="KW-0474">Menaquinone biosynthesis</keyword>
<dbReference type="EC" id="4.2.99.20" evidence="1"/>
<dbReference type="EMBL" id="CP001127">
    <property type="protein sequence ID" value="ACF92478.1"/>
    <property type="molecule type" value="Genomic_DNA"/>
</dbReference>
<dbReference type="RefSeq" id="WP_000979134.1">
    <property type="nucleotide sequence ID" value="NC_011094.1"/>
</dbReference>
<dbReference type="SMR" id="B4TPJ1"/>
<dbReference type="ESTHER" id="salty-YFBB">
    <property type="family name" value="MenH_SHCHC"/>
</dbReference>
<dbReference type="KEGG" id="sew:SeSA_A2536"/>
<dbReference type="HOGENOM" id="CLU_020336_38_2_6"/>
<dbReference type="UniPathway" id="UPA00079"/>
<dbReference type="UniPathway" id="UPA01057">
    <property type="reaction ID" value="UER00900"/>
</dbReference>
<dbReference type="Proteomes" id="UP000001865">
    <property type="component" value="Chromosome"/>
</dbReference>
<dbReference type="GO" id="GO:0070205">
    <property type="term" value="F:2-succinyl-6-hydroxy-2,4-cyclohexadiene-1-carboxylate synthase activity"/>
    <property type="evidence" value="ECO:0007669"/>
    <property type="project" value="UniProtKB-UniRule"/>
</dbReference>
<dbReference type="GO" id="GO:0009234">
    <property type="term" value="P:menaquinone biosynthetic process"/>
    <property type="evidence" value="ECO:0007669"/>
    <property type="project" value="UniProtKB-UniRule"/>
</dbReference>
<dbReference type="Gene3D" id="3.40.50.1820">
    <property type="entry name" value="alpha/beta hydrolase"/>
    <property type="match status" value="1"/>
</dbReference>
<dbReference type="HAMAP" id="MF_01660">
    <property type="entry name" value="MenH"/>
    <property type="match status" value="1"/>
</dbReference>
<dbReference type="InterPro" id="IPR000073">
    <property type="entry name" value="AB_hydrolase_1"/>
</dbReference>
<dbReference type="InterPro" id="IPR029058">
    <property type="entry name" value="AB_hydrolase_fold"/>
</dbReference>
<dbReference type="InterPro" id="IPR022485">
    <property type="entry name" value="SHCHC_synthase_MenH"/>
</dbReference>
<dbReference type="NCBIfam" id="TIGR03695">
    <property type="entry name" value="menH_SHCHC"/>
    <property type="match status" value="1"/>
</dbReference>
<dbReference type="NCBIfam" id="NF008340">
    <property type="entry name" value="PRK11126.1"/>
    <property type="match status" value="1"/>
</dbReference>
<dbReference type="PANTHER" id="PTHR42916">
    <property type="entry name" value="2-SUCCINYL-5-ENOLPYRUVYL-6-HYDROXY-3-CYCLOHEXENE-1-CARBOXYLATE SYNTHASE"/>
    <property type="match status" value="1"/>
</dbReference>
<dbReference type="PANTHER" id="PTHR42916:SF1">
    <property type="entry name" value="PROTEIN PHYLLO, CHLOROPLASTIC"/>
    <property type="match status" value="1"/>
</dbReference>
<dbReference type="Pfam" id="PF12697">
    <property type="entry name" value="Abhydrolase_6"/>
    <property type="match status" value="1"/>
</dbReference>
<dbReference type="SUPFAM" id="SSF53474">
    <property type="entry name" value="alpha/beta-Hydrolases"/>
    <property type="match status" value="1"/>
</dbReference>
<reference key="1">
    <citation type="journal article" date="2011" name="J. Bacteriol.">
        <title>Comparative genomics of 28 Salmonella enterica isolates: evidence for CRISPR-mediated adaptive sublineage evolution.</title>
        <authorList>
            <person name="Fricke W.F."/>
            <person name="Mammel M.K."/>
            <person name="McDermott P.F."/>
            <person name="Tartera C."/>
            <person name="White D.G."/>
            <person name="Leclerc J.E."/>
            <person name="Ravel J."/>
            <person name="Cebula T.A."/>
        </authorList>
    </citation>
    <scope>NUCLEOTIDE SEQUENCE [LARGE SCALE GENOMIC DNA]</scope>
    <source>
        <strain>CVM19633</strain>
    </source>
</reference>
<feature type="chain" id="PRO_1000187122" description="2-succinyl-6-hydroxy-2,4-cyclohexadiene-1-carboxylate synthase">
    <location>
        <begin position="1"/>
        <end position="252"/>
    </location>
</feature>
<comment type="function">
    <text evidence="1">Catalyzes a proton abstraction reaction that results in 2,5-elimination of pyruvate from 2-succinyl-5-enolpyruvyl-6-hydroxy-3-cyclohexene-1-carboxylate (SEPHCHC) and the formation of 2-succinyl-6-hydroxy-2,4-cyclohexadiene-1-carboxylate (SHCHC).</text>
</comment>
<comment type="catalytic activity">
    <reaction evidence="1">
        <text>5-enolpyruvoyl-6-hydroxy-2-succinyl-cyclohex-3-ene-1-carboxylate = (1R,6R)-6-hydroxy-2-succinyl-cyclohexa-2,4-diene-1-carboxylate + pyruvate</text>
        <dbReference type="Rhea" id="RHEA:25597"/>
        <dbReference type="ChEBI" id="CHEBI:15361"/>
        <dbReference type="ChEBI" id="CHEBI:58689"/>
        <dbReference type="ChEBI" id="CHEBI:58818"/>
        <dbReference type="EC" id="4.2.99.20"/>
    </reaction>
</comment>
<comment type="pathway">
    <text evidence="1">Quinol/quinone metabolism; 1,4-dihydroxy-2-naphthoate biosynthesis; 1,4-dihydroxy-2-naphthoate from chorismate: step 3/7.</text>
</comment>
<comment type="pathway">
    <text evidence="1">Quinol/quinone metabolism; menaquinone biosynthesis.</text>
</comment>
<comment type="subunit">
    <text evidence="1">Monomer.</text>
</comment>
<comment type="similarity">
    <text evidence="1">Belongs to the AB hydrolase superfamily. MenH family.</text>
</comment>